<proteinExistence type="inferred from homology"/>
<gene>
    <name type="ordered locus">Nther_1328</name>
</gene>
<comment type="similarity">
    <text evidence="1">Belongs to the RemA family.</text>
</comment>
<reference key="1">
    <citation type="submission" date="2008-04" db="EMBL/GenBank/DDBJ databases">
        <title>Complete sequence of chromosome of Natranaerobius thermophilus JW/NM-WN-LF.</title>
        <authorList>
            <consortium name="US DOE Joint Genome Institute"/>
            <person name="Copeland A."/>
            <person name="Lucas S."/>
            <person name="Lapidus A."/>
            <person name="Glavina del Rio T."/>
            <person name="Dalin E."/>
            <person name="Tice H."/>
            <person name="Bruce D."/>
            <person name="Goodwin L."/>
            <person name="Pitluck S."/>
            <person name="Chertkov O."/>
            <person name="Brettin T."/>
            <person name="Detter J.C."/>
            <person name="Han C."/>
            <person name="Kuske C.R."/>
            <person name="Schmutz J."/>
            <person name="Larimer F."/>
            <person name="Land M."/>
            <person name="Hauser L."/>
            <person name="Kyrpides N."/>
            <person name="Lykidis A."/>
            <person name="Mesbah N.M."/>
            <person name="Wiegel J."/>
        </authorList>
    </citation>
    <scope>NUCLEOTIDE SEQUENCE [LARGE SCALE GENOMIC DNA]</scope>
    <source>
        <strain>ATCC BAA-1301 / DSM 18059 / JW/NM-WN-LF</strain>
    </source>
</reference>
<evidence type="ECO:0000255" key="1">
    <source>
        <dbReference type="HAMAP-Rule" id="MF_01503"/>
    </source>
</evidence>
<sequence length="89" mass="9787">MSIKLVNIGFGNIVSANRIVAIVSPESAPIKRIVTEGRDRGMLIDATYGRRTRAVVITDSDHVILSAVQPETVKQRLHTDSSEDDEEIN</sequence>
<dbReference type="EMBL" id="CP001034">
    <property type="protein sequence ID" value="ACB84911.1"/>
    <property type="molecule type" value="Genomic_DNA"/>
</dbReference>
<dbReference type="RefSeq" id="WP_012447786.1">
    <property type="nucleotide sequence ID" value="NC_010718.1"/>
</dbReference>
<dbReference type="SMR" id="B2A2J6"/>
<dbReference type="FunCoup" id="B2A2J6">
    <property type="interactions" value="4"/>
</dbReference>
<dbReference type="STRING" id="457570.Nther_1328"/>
<dbReference type="KEGG" id="nth:Nther_1328"/>
<dbReference type="eggNOG" id="COG2052">
    <property type="taxonomic scope" value="Bacteria"/>
</dbReference>
<dbReference type="HOGENOM" id="CLU_165326_0_0_9"/>
<dbReference type="InParanoid" id="B2A2J6"/>
<dbReference type="OrthoDB" id="5432174at2"/>
<dbReference type="Proteomes" id="UP000001683">
    <property type="component" value="Chromosome"/>
</dbReference>
<dbReference type="HAMAP" id="MF_01503">
    <property type="entry name" value="RemA"/>
    <property type="match status" value="1"/>
</dbReference>
<dbReference type="InterPro" id="IPR007169">
    <property type="entry name" value="RemA-like"/>
</dbReference>
<dbReference type="NCBIfam" id="NF046064">
    <property type="entry name" value="MtxBflmRegRemA"/>
    <property type="match status" value="1"/>
</dbReference>
<dbReference type="NCBIfam" id="NF003315">
    <property type="entry name" value="PRK04323.1"/>
    <property type="match status" value="1"/>
</dbReference>
<dbReference type="PANTHER" id="PTHR38449:SF1">
    <property type="entry name" value="REGULATORY PROTEIN SSL2874-RELATED"/>
    <property type="match status" value="1"/>
</dbReference>
<dbReference type="PANTHER" id="PTHR38449">
    <property type="entry name" value="REGULATORY PROTEIN TM_1690-RELATED"/>
    <property type="match status" value="1"/>
</dbReference>
<dbReference type="Pfam" id="PF04025">
    <property type="entry name" value="RemA-like"/>
    <property type="match status" value="1"/>
</dbReference>
<keyword id="KW-1185">Reference proteome</keyword>
<name>Y1328_NATTJ</name>
<feature type="chain" id="PRO_1000198225" description="Putative regulatory protein Nther_1328">
    <location>
        <begin position="1"/>
        <end position="89"/>
    </location>
</feature>
<accession>B2A2J6</accession>
<organism>
    <name type="scientific">Natranaerobius thermophilus (strain ATCC BAA-1301 / DSM 18059 / JW/NM-WN-LF)</name>
    <dbReference type="NCBI Taxonomy" id="457570"/>
    <lineage>
        <taxon>Bacteria</taxon>
        <taxon>Bacillati</taxon>
        <taxon>Bacillota</taxon>
        <taxon>Clostridia</taxon>
        <taxon>Natranaerobiales</taxon>
        <taxon>Natranaerobiaceae</taxon>
        <taxon>Natranaerobius</taxon>
    </lineage>
</organism>
<protein>
    <recommendedName>
        <fullName evidence="1">Putative regulatory protein Nther_1328</fullName>
    </recommendedName>
</protein>